<protein>
    <recommendedName>
        <fullName>Putative RING finger protein ORF9</fullName>
    </recommendedName>
</protein>
<accession>Q6R7L4</accession>
<keyword id="KW-0175">Coiled coil</keyword>
<keyword id="KW-0479">Metal-binding</keyword>
<keyword id="KW-1185">Reference proteome</keyword>
<keyword id="KW-0862">Zinc</keyword>
<keyword id="KW-0863">Zinc-finger</keyword>
<name>Y009_OSHVF</name>
<feature type="chain" id="PRO_0000385029" description="Putative RING finger protein ORF9">
    <location>
        <begin position="1"/>
        <end position="592"/>
    </location>
</feature>
<feature type="zinc finger region" description="RING-type" evidence="2">
    <location>
        <begin position="12"/>
        <end position="49"/>
    </location>
</feature>
<feature type="coiled-coil region" evidence="1">
    <location>
        <begin position="414"/>
        <end position="441"/>
    </location>
</feature>
<reference key="1">
    <citation type="journal article" date="2005" name="J. Gen. Virol.">
        <title>A novel class of herpesvirus with bivalve hosts.</title>
        <authorList>
            <person name="Davison A.J."/>
            <person name="Trus B.L."/>
            <person name="Cheng N."/>
            <person name="Steven A.C."/>
            <person name="Watson M.S."/>
            <person name="Cunningham C."/>
            <person name="Le Deuff R.M."/>
            <person name="Renault T."/>
        </authorList>
    </citation>
    <scope>NUCLEOTIDE SEQUENCE [LARGE SCALE GENOMIC DNA]</scope>
</reference>
<dbReference type="EMBL" id="AY509253">
    <property type="protein sequence ID" value="AAS00901.1"/>
    <property type="molecule type" value="Genomic_DNA"/>
</dbReference>
<dbReference type="RefSeq" id="YP_024554.1">
    <property type="nucleotide sequence ID" value="NC_005881.2"/>
</dbReference>
<dbReference type="KEGG" id="vg:2948235"/>
<dbReference type="Proteomes" id="UP000007021">
    <property type="component" value="Segment"/>
</dbReference>
<dbReference type="GO" id="GO:0008270">
    <property type="term" value="F:zinc ion binding"/>
    <property type="evidence" value="ECO:0007669"/>
    <property type="project" value="UniProtKB-KW"/>
</dbReference>
<dbReference type="CDD" id="cd16449">
    <property type="entry name" value="RING-HC"/>
    <property type="match status" value="1"/>
</dbReference>
<dbReference type="Gene3D" id="3.30.40.10">
    <property type="entry name" value="Zinc/RING finger domain, C3HC4 (zinc finger)"/>
    <property type="match status" value="1"/>
</dbReference>
<dbReference type="InterPro" id="IPR018957">
    <property type="entry name" value="Znf_C3HC4_RING-type"/>
</dbReference>
<dbReference type="InterPro" id="IPR001841">
    <property type="entry name" value="Znf_RING"/>
</dbReference>
<dbReference type="InterPro" id="IPR013083">
    <property type="entry name" value="Znf_RING/FYVE/PHD"/>
</dbReference>
<dbReference type="InterPro" id="IPR017907">
    <property type="entry name" value="Znf_RING_CS"/>
</dbReference>
<dbReference type="Pfam" id="PF00097">
    <property type="entry name" value="zf-C3HC4"/>
    <property type="match status" value="1"/>
</dbReference>
<dbReference type="SMART" id="SM00184">
    <property type="entry name" value="RING"/>
    <property type="match status" value="1"/>
</dbReference>
<dbReference type="SUPFAM" id="SSF57850">
    <property type="entry name" value="RING/U-box"/>
    <property type="match status" value="1"/>
</dbReference>
<dbReference type="PROSITE" id="PS00518">
    <property type="entry name" value="ZF_RING_1"/>
    <property type="match status" value="1"/>
</dbReference>
<dbReference type="PROSITE" id="PS50089">
    <property type="entry name" value="ZF_RING_2"/>
    <property type="match status" value="1"/>
</dbReference>
<gene>
    <name type="ORF">ORF9</name>
</gene>
<organism>
    <name type="scientific">Ostreid herpesvirus 1 (isolate France)</name>
    <name type="common">OsHV-1</name>
    <name type="synonym">Pacific oyster herpesvirus</name>
    <dbReference type="NCBI Taxonomy" id="654903"/>
    <lineage>
        <taxon>Viruses</taxon>
        <taxon>Duplodnaviria</taxon>
        <taxon>Heunggongvirae</taxon>
        <taxon>Peploviricota</taxon>
        <taxon>Herviviricetes</taxon>
        <taxon>Herpesvirales</taxon>
        <taxon>Malacoherpesviridae</taxon>
        <taxon>Ostreavirus</taxon>
        <taxon>Ostreavirus ostreidmalaco1</taxon>
        <taxon>Ostreid herpesvirus 1</taxon>
    </lineage>
</organism>
<evidence type="ECO:0000255" key="1"/>
<evidence type="ECO:0000255" key="2">
    <source>
        <dbReference type="PROSITE-ProRule" id="PRU00175"/>
    </source>
</evidence>
<sequence>MACSKMSVDLECCICLEEDIERVDTIPCQHTVCRPCYLKPMINKCPVCRVRWIARERDPLAKDYTGEHYAHTYGFFAVNIDEESEEEEEEQVIEEEPQTPEIDPEEIELPRRFVDERIEYFLATGLRIDYVLTRGYCPSIQADEQEVLYLPLYTIYCNAYDANDDILHGQEIEITIQITRGECGSGWCEAQFVYVSITDSEDSGPKPITHSVKGGIGAVRFSREEIEFELQTPLPIESRTSYSHFEWEITTPYFKINQTGEELYPWAVLDFYEEEFWEPIVEPLDGPVDVDMSSYSAIGGIASMLRVTAAARRDNDEQYNEIIGRHVSRKVLNGGAEKDYIYLREINGKEFSIYDKIGNCFVGTNKTGITLPFTHVPSPAAIRGNHHILKEPEYIYGEERDTSYETALQSFDDWELIKREELLQRRYKREEQNLKYTSNRLFYFEKEFEEIMEDKWAIESYMCEDDDNTKPEYTTDMRVACEQRDRHGTDIVKCRLDKEVGSRRMHTLIDGESGVGKSFLAGHLSRGLVFDLDWITPNEDGSKPELPEDLHYPIIILGKRFDYDMREITKRLLYKKEYVVVKLSYMYFFYCI</sequence>
<organismHost>
    <name type="scientific">Magallana gigas</name>
    <name type="common">Pacific oyster</name>
    <name type="synonym">Crassostrea gigas</name>
    <dbReference type="NCBI Taxonomy" id="29159"/>
</organismHost>
<organismHost>
    <name type="scientific">Pecten maximus</name>
    <name type="common">King scallop</name>
    <name type="synonym">Pilgrim's clam</name>
    <dbReference type="NCBI Taxonomy" id="6579"/>
</organismHost>
<proteinExistence type="predicted"/>